<gene>
    <name type="primary">Hug</name>
    <name type="ORF">CG6371</name>
</gene>
<name>HUGIN_DROME</name>
<accession>Q9VG55</accession>
<dbReference type="EMBL" id="AJ133105">
    <property type="protein sequence ID" value="CAB88005.1"/>
    <property type="molecule type" value="Genomic_DNA"/>
</dbReference>
<dbReference type="EMBL" id="AE014297">
    <property type="protein sequence ID" value="AAF54833.1"/>
    <property type="molecule type" value="Genomic_DNA"/>
</dbReference>
<dbReference type="EMBL" id="AY047528">
    <property type="protein sequence ID" value="AAK77260.1"/>
    <property type="molecule type" value="mRNA"/>
</dbReference>
<dbReference type="RefSeq" id="NP_524329.1">
    <property type="nucleotide sequence ID" value="NM_079605.2"/>
</dbReference>
<dbReference type="BioGRID" id="66642">
    <property type="interactions" value="4"/>
</dbReference>
<dbReference type="DIP" id="DIP-17451N"/>
<dbReference type="FunCoup" id="Q9VG55">
    <property type="interactions" value="76"/>
</dbReference>
<dbReference type="IntAct" id="Q9VG55">
    <property type="interactions" value="1"/>
</dbReference>
<dbReference type="STRING" id="7227.FBpp0082108"/>
<dbReference type="PaxDb" id="7227-FBpp0082108"/>
<dbReference type="DNASU" id="41547"/>
<dbReference type="EnsemblMetazoa" id="FBtr0082639">
    <property type="protein sequence ID" value="FBpp0082108"/>
    <property type="gene ID" value="FBgn0028374"/>
</dbReference>
<dbReference type="GeneID" id="41547"/>
<dbReference type="KEGG" id="dme:Dmel_CG6371"/>
<dbReference type="AGR" id="FB:FBgn0028374"/>
<dbReference type="CTD" id="15573"/>
<dbReference type="FlyBase" id="FBgn0028374">
    <property type="gene designation" value="Hug"/>
</dbReference>
<dbReference type="VEuPathDB" id="VectorBase:FBgn0028374"/>
<dbReference type="eggNOG" id="ENOG502TAND">
    <property type="taxonomic scope" value="Eukaryota"/>
</dbReference>
<dbReference type="HOGENOM" id="CLU_1422905_0_0_1"/>
<dbReference type="InParanoid" id="Q9VG55"/>
<dbReference type="OMA" id="RMMKKSV"/>
<dbReference type="OrthoDB" id="8061564at2759"/>
<dbReference type="PhylomeDB" id="Q9VG55"/>
<dbReference type="BioGRID-ORCS" id="41547">
    <property type="hits" value="0 hits in 1 CRISPR screen"/>
</dbReference>
<dbReference type="GenomeRNAi" id="41547"/>
<dbReference type="PRO" id="PR:Q9VG55"/>
<dbReference type="Proteomes" id="UP000000803">
    <property type="component" value="Chromosome 3R"/>
</dbReference>
<dbReference type="Bgee" id="FBgn0028374">
    <property type="expression patterns" value="Expressed in adult Hugin neuron (Drosophila) in brain and 36 other cell types or tissues"/>
</dbReference>
<dbReference type="GO" id="GO:0005576">
    <property type="term" value="C:extracellular region"/>
    <property type="evidence" value="ECO:0000303"/>
    <property type="project" value="UniProtKB"/>
</dbReference>
<dbReference type="GO" id="GO:0005615">
    <property type="term" value="C:extracellular space"/>
    <property type="evidence" value="ECO:0000314"/>
    <property type="project" value="FlyBase"/>
</dbReference>
<dbReference type="GO" id="GO:0008255">
    <property type="term" value="F:ecdysis-triggering hormone activity"/>
    <property type="evidence" value="ECO:0000250"/>
    <property type="project" value="FlyBase"/>
</dbReference>
<dbReference type="GO" id="GO:0005179">
    <property type="term" value="F:hormone activity"/>
    <property type="evidence" value="ECO:0000303"/>
    <property type="project" value="FlyBase"/>
</dbReference>
<dbReference type="GO" id="GO:0016084">
    <property type="term" value="F:myostimulatory hormone activity"/>
    <property type="evidence" value="ECO:0000314"/>
    <property type="project" value="FlyBase"/>
</dbReference>
<dbReference type="GO" id="GO:0071855">
    <property type="term" value="F:neuropeptide receptor binding"/>
    <property type="evidence" value="ECO:0000353"/>
    <property type="project" value="FlyBase"/>
</dbReference>
<dbReference type="GO" id="GO:0005102">
    <property type="term" value="F:signaling receptor binding"/>
    <property type="evidence" value="ECO:0000250"/>
    <property type="project" value="FlyBase"/>
</dbReference>
<dbReference type="GO" id="GO:0018990">
    <property type="term" value="P:ecdysis, chitin-based cuticle"/>
    <property type="evidence" value="ECO:0000315"/>
    <property type="project" value="UniProtKB"/>
</dbReference>
<dbReference type="GO" id="GO:0030536">
    <property type="term" value="P:larval feeding behavior"/>
    <property type="evidence" value="ECO:0000315"/>
    <property type="project" value="FlyBase"/>
</dbReference>
<dbReference type="GO" id="GO:0007218">
    <property type="term" value="P:neuropeptide signaling pathway"/>
    <property type="evidence" value="ECO:0000314"/>
    <property type="project" value="FlyBase"/>
</dbReference>
<feature type="signal peptide" evidence="3">
    <location>
        <begin position="1"/>
        <end position="24"/>
    </location>
</feature>
<feature type="propeptide" id="PRO_0000029908" evidence="3">
    <location>
        <begin position="25"/>
        <end position="119"/>
    </location>
</feature>
<feature type="peptide" id="PRO_0000029909" description="Hug-gamma" evidence="1">
    <location>
        <begin position="121"/>
        <end position="137"/>
    </location>
</feature>
<feature type="peptide" id="PRO_0000029910" description="Hug-peptide" evidence="1">
    <location>
        <begin position="140"/>
        <end status="unknown"/>
    </location>
</feature>
<feature type="propeptide" id="PRO_0000029911" evidence="3">
    <location>
        <begin status="unknown"/>
        <end position="171"/>
    </location>
</feature>
<feature type="peptide" id="PRO_0000029912" description="PK-2" evidence="3">
    <location>
        <begin position="174"/>
        <end position="181"/>
    </location>
</feature>
<feature type="propeptide" id="PRO_0000029913" evidence="3">
    <location>
        <begin position="185"/>
        <end position="191"/>
    </location>
</feature>
<feature type="modified residue" description="Leucine amide" evidence="1">
    <location>
        <position position="137"/>
    </location>
</feature>
<feature type="modified residue" description="Leucine amide" evidence="2">
    <location>
        <position position="181"/>
    </location>
</feature>
<sequence length="191" mass="20623">MCGPSYCTLLLIAASCYILVCSHAKSLQGTSKLDLGNHISAGSARGSLSPASPALSEARQKRAMGDYKELTDIIDELEENSLAQKASATMQVAAMPPQGQEFDLDTMPPLTYYLLLQKLRQLQSNGEPAYRVRTPRLGRSIDSWRLLDAEGATGMAGGEEAIGGQFMQRMVKKSVPFKPRLGKRAQVCGGD</sequence>
<proteinExistence type="evidence at protein level"/>
<reference key="1">
    <citation type="journal article" date="2002" name="Mech. Dev.">
        <title>The Drosophila hugin gene codes for myostimulatory and ecdysis-modifying neuropeptides.</title>
        <authorList>
            <person name="Meng X."/>
            <person name="Wahlstreom G."/>
            <person name="Immonen T."/>
            <person name="Kolmer M."/>
            <person name="Tirronen M."/>
            <person name="Predel R."/>
            <person name="Kalkkinen N."/>
            <person name="Heino T."/>
            <person name="Sariola H."/>
            <person name="Roos C."/>
        </authorList>
    </citation>
    <scope>NUCLEOTIDE SEQUENCE [GENOMIC DNA]</scope>
    <scope>PROTEIN SEQUENCE OF N-TERMINUS</scope>
    <scope>PROTEIN SEQUENCE OF 140-147 AND 174-180</scope>
    <scope>PROBABLE FUNCTION</scope>
    <scope>SUBCELLULAR LOCATION</scope>
    <scope>TISSUE SPECIFICITY</scope>
    <scope>DEVELOPMENTAL STAGE</scope>
</reference>
<reference key="2">
    <citation type="journal article" date="2000" name="Science">
        <title>The genome sequence of Drosophila melanogaster.</title>
        <authorList>
            <person name="Adams M.D."/>
            <person name="Celniker S.E."/>
            <person name="Holt R.A."/>
            <person name="Evans C.A."/>
            <person name="Gocayne J.D."/>
            <person name="Amanatides P.G."/>
            <person name="Scherer S.E."/>
            <person name="Li P.W."/>
            <person name="Hoskins R.A."/>
            <person name="Galle R.F."/>
            <person name="George R.A."/>
            <person name="Lewis S.E."/>
            <person name="Richards S."/>
            <person name="Ashburner M."/>
            <person name="Henderson S.N."/>
            <person name="Sutton G.G."/>
            <person name="Wortman J.R."/>
            <person name="Yandell M.D."/>
            <person name="Zhang Q."/>
            <person name="Chen L.X."/>
            <person name="Brandon R.C."/>
            <person name="Rogers Y.-H.C."/>
            <person name="Blazej R.G."/>
            <person name="Champe M."/>
            <person name="Pfeiffer B.D."/>
            <person name="Wan K.H."/>
            <person name="Doyle C."/>
            <person name="Baxter E.G."/>
            <person name="Helt G."/>
            <person name="Nelson C.R."/>
            <person name="Miklos G.L.G."/>
            <person name="Abril J.F."/>
            <person name="Agbayani A."/>
            <person name="An H.-J."/>
            <person name="Andrews-Pfannkoch C."/>
            <person name="Baldwin D."/>
            <person name="Ballew R.M."/>
            <person name="Basu A."/>
            <person name="Baxendale J."/>
            <person name="Bayraktaroglu L."/>
            <person name="Beasley E.M."/>
            <person name="Beeson K.Y."/>
            <person name="Benos P.V."/>
            <person name="Berman B.P."/>
            <person name="Bhandari D."/>
            <person name="Bolshakov S."/>
            <person name="Borkova D."/>
            <person name="Botchan M.R."/>
            <person name="Bouck J."/>
            <person name="Brokstein P."/>
            <person name="Brottier P."/>
            <person name="Burtis K.C."/>
            <person name="Busam D.A."/>
            <person name="Butler H."/>
            <person name="Cadieu E."/>
            <person name="Center A."/>
            <person name="Chandra I."/>
            <person name="Cherry J.M."/>
            <person name="Cawley S."/>
            <person name="Dahlke C."/>
            <person name="Davenport L.B."/>
            <person name="Davies P."/>
            <person name="de Pablos B."/>
            <person name="Delcher A."/>
            <person name="Deng Z."/>
            <person name="Mays A.D."/>
            <person name="Dew I."/>
            <person name="Dietz S.M."/>
            <person name="Dodson K."/>
            <person name="Doup L.E."/>
            <person name="Downes M."/>
            <person name="Dugan-Rocha S."/>
            <person name="Dunkov B.C."/>
            <person name="Dunn P."/>
            <person name="Durbin K.J."/>
            <person name="Evangelista C.C."/>
            <person name="Ferraz C."/>
            <person name="Ferriera S."/>
            <person name="Fleischmann W."/>
            <person name="Fosler C."/>
            <person name="Gabrielian A.E."/>
            <person name="Garg N.S."/>
            <person name="Gelbart W.M."/>
            <person name="Glasser K."/>
            <person name="Glodek A."/>
            <person name="Gong F."/>
            <person name="Gorrell J.H."/>
            <person name="Gu Z."/>
            <person name="Guan P."/>
            <person name="Harris M."/>
            <person name="Harris N.L."/>
            <person name="Harvey D.A."/>
            <person name="Heiman T.J."/>
            <person name="Hernandez J.R."/>
            <person name="Houck J."/>
            <person name="Hostin D."/>
            <person name="Houston K.A."/>
            <person name="Howland T.J."/>
            <person name="Wei M.-H."/>
            <person name="Ibegwam C."/>
            <person name="Jalali M."/>
            <person name="Kalush F."/>
            <person name="Karpen G.H."/>
            <person name="Ke Z."/>
            <person name="Kennison J.A."/>
            <person name="Ketchum K.A."/>
            <person name="Kimmel B.E."/>
            <person name="Kodira C.D."/>
            <person name="Kraft C.L."/>
            <person name="Kravitz S."/>
            <person name="Kulp D."/>
            <person name="Lai Z."/>
            <person name="Lasko P."/>
            <person name="Lei Y."/>
            <person name="Levitsky A.A."/>
            <person name="Li J.H."/>
            <person name="Li Z."/>
            <person name="Liang Y."/>
            <person name="Lin X."/>
            <person name="Liu X."/>
            <person name="Mattei B."/>
            <person name="McIntosh T.C."/>
            <person name="McLeod M.P."/>
            <person name="McPherson D."/>
            <person name="Merkulov G."/>
            <person name="Milshina N.V."/>
            <person name="Mobarry C."/>
            <person name="Morris J."/>
            <person name="Moshrefi A."/>
            <person name="Mount S.M."/>
            <person name="Moy M."/>
            <person name="Murphy B."/>
            <person name="Murphy L."/>
            <person name="Muzny D.M."/>
            <person name="Nelson D.L."/>
            <person name="Nelson D.R."/>
            <person name="Nelson K.A."/>
            <person name="Nixon K."/>
            <person name="Nusskern D.R."/>
            <person name="Pacleb J.M."/>
            <person name="Palazzolo M."/>
            <person name="Pittman G.S."/>
            <person name="Pan S."/>
            <person name="Pollard J."/>
            <person name="Puri V."/>
            <person name="Reese M.G."/>
            <person name="Reinert K."/>
            <person name="Remington K."/>
            <person name="Saunders R.D.C."/>
            <person name="Scheeler F."/>
            <person name="Shen H."/>
            <person name="Shue B.C."/>
            <person name="Siden-Kiamos I."/>
            <person name="Simpson M."/>
            <person name="Skupski M.P."/>
            <person name="Smith T.J."/>
            <person name="Spier E."/>
            <person name="Spradling A.C."/>
            <person name="Stapleton M."/>
            <person name="Strong R."/>
            <person name="Sun E."/>
            <person name="Svirskas R."/>
            <person name="Tector C."/>
            <person name="Turner R."/>
            <person name="Venter E."/>
            <person name="Wang A.H."/>
            <person name="Wang X."/>
            <person name="Wang Z.-Y."/>
            <person name="Wassarman D.A."/>
            <person name="Weinstock G.M."/>
            <person name="Weissenbach J."/>
            <person name="Williams S.M."/>
            <person name="Woodage T."/>
            <person name="Worley K.C."/>
            <person name="Wu D."/>
            <person name="Yang S."/>
            <person name="Yao Q.A."/>
            <person name="Ye J."/>
            <person name="Yeh R.-F."/>
            <person name="Zaveri J.S."/>
            <person name="Zhan M."/>
            <person name="Zhang G."/>
            <person name="Zhao Q."/>
            <person name="Zheng L."/>
            <person name="Zheng X.H."/>
            <person name="Zhong F.N."/>
            <person name="Zhong W."/>
            <person name="Zhou X."/>
            <person name="Zhu S.C."/>
            <person name="Zhu X."/>
            <person name="Smith H.O."/>
            <person name="Gibbs R.A."/>
            <person name="Myers E.W."/>
            <person name="Rubin G.M."/>
            <person name="Venter J.C."/>
        </authorList>
    </citation>
    <scope>NUCLEOTIDE SEQUENCE [LARGE SCALE GENOMIC DNA]</scope>
    <source>
        <strain>Berkeley</strain>
    </source>
</reference>
<reference key="3">
    <citation type="journal article" date="2002" name="Genome Biol.">
        <title>Annotation of the Drosophila melanogaster euchromatic genome: a systematic review.</title>
        <authorList>
            <person name="Misra S."/>
            <person name="Crosby M.A."/>
            <person name="Mungall C.J."/>
            <person name="Matthews B.B."/>
            <person name="Campbell K.S."/>
            <person name="Hradecky P."/>
            <person name="Huang Y."/>
            <person name="Kaminker J.S."/>
            <person name="Millburn G.H."/>
            <person name="Prochnik S.E."/>
            <person name="Smith C.D."/>
            <person name="Tupy J.L."/>
            <person name="Whitfield E.J."/>
            <person name="Bayraktaroglu L."/>
            <person name="Berman B.P."/>
            <person name="Bettencourt B.R."/>
            <person name="Celniker S.E."/>
            <person name="de Grey A.D.N.J."/>
            <person name="Drysdale R.A."/>
            <person name="Harris N.L."/>
            <person name="Richter J."/>
            <person name="Russo S."/>
            <person name="Schroeder A.J."/>
            <person name="Shu S.Q."/>
            <person name="Stapleton M."/>
            <person name="Yamada C."/>
            <person name="Ashburner M."/>
            <person name="Gelbart W.M."/>
            <person name="Rubin G.M."/>
            <person name="Lewis S.E."/>
        </authorList>
    </citation>
    <scope>GENOME REANNOTATION</scope>
    <source>
        <strain>Berkeley</strain>
    </source>
</reference>
<reference key="4">
    <citation type="journal article" date="2002" name="Genome Biol.">
        <title>A Drosophila full-length cDNA resource.</title>
        <authorList>
            <person name="Stapleton M."/>
            <person name="Carlson J.W."/>
            <person name="Brokstein P."/>
            <person name="Yu C."/>
            <person name="Champe M."/>
            <person name="George R.A."/>
            <person name="Guarin H."/>
            <person name="Kronmiller B."/>
            <person name="Pacleb J.M."/>
            <person name="Park S."/>
            <person name="Wan K.H."/>
            <person name="Rubin G.M."/>
            <person name="Celniker S.E."/>
        </authorList>
    </citation>
    <scope>NUCLEOTIDE SEQUENCE [LARGE SCALE MRNA]</scope>
    <source>
        <strain>Berkeley</strain>
        <tissue>Head</tissue>
    </source>
</reference>
<reference key="5">
    <citation type="journal article" date="2002" name="J. Biol. Chem.">
        <title>Peptidomics of the larval Drosophila melanogaster central nervous system.</title>
        <authorList>
            <person name="Baggerman G."/>
            <person name="Cerstiaens A."/>
            <person name="De Loof A."/>
            <person name="Schoofs L."/>
        </authorList>
    </citation>
    <scope>PROTEIN SEQUENCE OF 174-181</scope>
    <scope>AMIDATION AT LEU-181</scope>
    <source>
        <tissue>Larva</tissue>
    </source>
</reference>
<reference key="6">
    <citation type="journal article" date="2004" name="J. Neurochem.">
        <title>Expression of a novel neuropeptide, NVGTLARDFQLPIPNamide, in the larval and adult brain of Drosophila melanogaster.</title>
        <authorList>
            <person name="Verleyen P."/>
            <person name="Baggerman G."/>
            <person name="Wiehart U."/>
            <person name="Schoeters E."/>
            <person name="Van Lommel A."/>
            <person name="De Loof A."/>
            <person name="Schoofs L."/>
        </authorList>
    </citation>
    <scope>PROTEIN SEQUENCE OF 174-181</scope>
    <source>
        <tissue>CNS</tissue>
    </source>
</reference>
<protein>
    <recommendedName>
        <fullName>Protein hugin</fullName>
    </recommendedName>
    <component>
        <recommendedName>
            <fullName>Hug-gamma</fullName>
        </recommendedName>
    </component>
    <component>
        <recommendedName>
            <fullName>Hug-peptide</fullName>
        </recommendedName>
    </component>
    <component>
        <recommendedName>
            <fullName>PK-2</fullName>
        </recommendedName>
        <alternativeName>
            <fullName>Drm-PK-2</fullName>
        </alternativeName>
        <alternativeName>
            <fullName>Myotrophin-2</fullName>
            <shortName>Drm-MT2</shortName>
            <shortName>MT-2</shortName>
        </alternativeName>
        <alternativeName>
            <fullName>Pyrokinin-2</fullName>
        </alternativeName>
    </component>
</protein>
<evidence type="ECO:0000255" key="1"/>
<evidence type="ECO:0000269" key="2">
    <source>
    </source>
</evidence>
<evidence type="ECO:0000269" key="3">
    <source>
    </source>
</evidence>
<evidence type="ECO:0000305" key="4"/>
<keyword id="KW-0027">Amidation</keyword>
<keyword id="KW-0165">Cleavage on pair of basic residues</keyword>
<keyword id="KW-0903">Direct protein sequencing</keyword>
<keyword id="KW-0527">Neuropeptide</keyword>
<keyword id="KW-1185">Reference proteome</keyword>
<keyword id="KW-0964">Secreted</keyword>
<keyword id="KW-0732">Signal</keyword>
<comment type="function">
    <text>Probably has a role in larval molting.</text>
</comment>
<comment type="subcellular location">
    <subcellularLocation>
        <location evidence="3">Secreted</location>
    </subcellularLocation>
</comment>
<comment type="tissue specificity">
    <text evidence="3">Expressed in a subgroup of neurosecretory cells in the subesophageal ganglion from embryonic stage 9 to larval stages.</text>
</comment>
<comment type="developmental stage">
    <text evidence="3">Expressed during embryogenesis through to adult stages with highest expression at later half of embryogenesis and during larval stages.</text>
</comment>
<comment type="similarity">
    <text evidence="4">Belongs to the pyrokinin family.</text>
</comment>
<organism>
    <name type="scientific">Drosophila melanogaster</name>
    <name type="common">Fruit fly</name>
    <dbReference type="NCBI Taxonomy" id="7227"/>
    <lineage>
        <taxon>Eukaryota</taxon>
        <taxon>Metazoa</taxon>
        <taxon>Ecdysozoa</taxon>
        <taxon>Arthropoda</taxon>
        <taxon>Hexapoda</taxon>
        <taxon>Insecta</taxon>
        <taxon>Pterygota</taxon>
        <taxon>Neoptera</taxon>
        <taxon>Endopterygota</taxon>
        <taxon>Diptera</taxon>
        <taxon>Brachycera</taxon>
        <taxon>Muscomorpha</taxon>
        <taxon>Ephydroidea</taxon>
        <taxon>Drosophilidae</taxon>
        <taxon>Drosophila</taxon>
        <taxon>Sophophora</taxon>
    </lineage>
</organism>